<sequence length="96" mass="8899">SPAALQSSSFGSAGFGSTNFGSSGFGPSLGSTGFGSAGFASPGFGSPSLGSAAFGSSSFGSPSLGSTGFGSSSFGSTSGLPYLVVIPNNPAVGGLR</sequence>
<evidence type="ECO:0000256" key="1">
    <source>
        <dbReference type="SAM" id="MobiDB-lite"/>
    </source>
</evidence>
<comment type="function">
    <text>Associates with chitin and plays a role in calcification.</text>
</comment>
<comment type="subcellular location">
    <subcellularLocation>
        <location>Secreted</location>
    </subcellularLocation>
</comment>
<comment type="tissue specificity">
    <text>Expressed in the gastroliths.</text>
</comment>
<comment type="PTM">
    <text>The N-terminus is blocked.</text>
</comment>
<comment type="miscellaneous">
    <text>The gastrolith is a unique 'organ' that absorbs the calcium in the outer shell, allowing the shell to soften and break when it is necessary to shed it. The crayfish then re-absorbs the calcium from the 'gastrolith' and the shell becomes hard again.</text>
</comment>
<reference key="1">
    <citation type="journal article" date="1996" name="Biosci. Biotechnol. Biochem.">
        <title>Characterization of a matrix protein in the gastroliths of the crayfish Procambarus clarkii.</title>
        <authorList>
            <person name="Ishii K."/>
            <person name="Yanagisawa T."/>
            <person name="Nagasawa H."/>
        </authorList>
    </citation>
    <scope>PROTEIN SEQUENCE</scope>
    <scope>PROBABLE FUNCTION</scope>
</reference>
<proteinExistence type="evidence at protein level"/>
<feature type="chain" id="PRO_0000087429" description="Gastrolith matrix protein">
    <location>
        <begin position="1" status="less than"/>
        <end position="96" status="greater than"/>
    </location>
</feature>
<feature type="repeat" description="1">
    <location>
        <begin position="11"/>
        <end position="15"/>
    </location>
</feature>
<feature type="repeat" description="2">
    <location>
        <begin position="16"/>
        <end position="20"/>
    </location>
</feature>
<feature type="repeat" description="3">
    <location>
        <begin position="21"/>
        <end position="25"/>
    </location>
</feature>
<feature type="repeat" description="4">
    <location>
        <begin position="30"/>
        <end position="34"/>
    </location>
</feature>
<feature type="repeat" description="5">
    <location>
        <begin position="35"/>
        <end position="39"/>
    </location>
</feature>
<feature type="repeat" description="6">
    <location>
        <begin position="50"/>
        <end position="54"/>
    </location>
</feature>
<feature type="repeat" description="7">
    <location>
        <begin position="55"/>
        <end position="59"/>
    </location>
</feature>
<feature type="repeat" description="8">
    <location>
        <begin position="65"/>
        <end position="69"/>
    </location>
</feature>
<feature type="repeat" description="9">
    <location>
        <begin position="70"/>
        <end position="74"/>
    </location>
</feature>
<feature type="region of interest" description="9 X 5 AA tandem repeat of G-S-X-X-F">
    <location>
        <begin position="11"/>
        <end position="74"/>
    </location>
</feature>
<feature type="region of interest" description="Disordered" evidence="1">
    <location>
        <begin position="75"/>
        <end position="96"/>
    </location>
</feature>
<feature type="non-terminal residue">
    <location>
        <position position="1"/>
    </location>
</feature>
<feature type="non-terminal residue">
    <location>
        <position position="96"/>
    </location>
</feature>
<accession>Q7M3P2</accession>
<dbReference type="PIR" id="PC4212">
    <property type="entry name" value="PC4212"/>
</dbReference>
<dbReference type="GO" id="GO:0005576">
    <property type="term" value="C:extracellular region"/>
    <property type="evidence" value="ECO:0007669"/>
    <property type="project" value="UniProtKB-SubCell"/>
</dbReference>
<dbReference type="GO" id="GO:0008061">
    <property type="term" value="F:chitin binding"/>
    <property type="evidence" value="ECO:0007669"/>
    <property type="project" value="UniProtKB-KW"/>
</dbReference>
<dbReference type="GO" id="GO:0031214">
    <property type="term" value="P:biomineral tissue development"/>
    <property type="evidence" value="ECO:0007669"/>
    <property type="project" value="UniProtKB-KW"/>
</dbReference>
<name>GAMP_PROCL</name>
<protein>
    <recommendedName>
        <fullName>Gastrolith matrix protein</fullName>
    </recommendedName>
</protein>
<keyword id="KW-0091">Biomineralization</keyword>
<keyword id="KW-0147">Chitin-binding</keyword>
<keyword id="KW-0903">Direct protein sequencing</keyword>
<keyword id="KW-0677">Repeat</keyword>
<keyword id="KW-0964">Secreted</keyword>
<organism>
    <name type="scientific">Procambarus clarkii</name>
    <name type="common">Red swamp crayfish</name>
    <dbReference type="NCBI Taxonomy" id="6728"/>
    <lineage>
        <taxon>Eukaryota</taxon>
        <taxon>Metazoa</taxon>
        <taxon>Ecdysozoa</taxon>
        <taxon>Arthropoda</taxon>
        <taxon>Crustacea</taxon>
        <taxon>Multicrustacea</taxon>
        <taxon>Malacostraca</taxon>
        <taxon>Eumalacostraca</taxon>
        <taxon>Eucarida</taxon>
        <taxon>Decapoda</taxon>
        <taxon>Pleocyemata</taxon>
        <taxon>Astacidea</taxon>
        <taxon>Astacoidea</taxon>
        <taxon>Cambaridae</taxon>
        <taxon>Procambarus</taxon>
    </lineage>
</organism>